<gene>
    <name type="primary">apgM2</name>
    <name type="ordered locus">MJ0010</name>
</gene>
<proteinExistence type="evidence at protein level"/>
<feature type="chain" id="PRO_0000138135" description="2,3-bisphosphoglycerate-independent phosphoglycerate mutase 2">
    <location>
        <begin position="1"/>
        <end position="428"/>
    </location>
</feature>
<dbReference type="EC" id="5.4.2.12"/>
<dbReference type="EMBL" id="L77117">
    <property type="protein sequence ID" value="AAB97991.1"/>
    <property type="molecule type" value="Genomic_DNA"/>
</dbReference>
<dbReference type="PIR" id="B64301">
    <property type="entry name" value="B64301"/>
</dbReference>
<dbReference type="RefSeq" id="WP_010869503.1">
    <property type="nucleotide sequence ID" value="NC_000909.1"/>
</dbReference>
<dbReference type="SMR" id="Q60326"/>
<dbReference type="FunCoup" id="Q60326">
    <property type="interactions" value="158"/>
</dbReference>
<dbReference type="STRING" id="243232.MJ_0010"/>
<dbReference type="PaxDb" id="243232-MJ_0010"/>
<dbReference type="EnsemblBacteria" id="AAB97991">
    <property type="protein sequence ID" value="AAB97991"/>
    <property type="gene ID" value="MJ_0010"/>
</dbReference>
<dbReference type="GeneID" id="1450849"/>
<dbReference type="KEGG" id="mja:MJ_0010"/>
<dbReference type="eggNOG" id="arCOG01696">
    <property type="taxonomic scope" value="Archaea"/>
</dbReference>
<dbReference type="HOGENOM" id="CLU_034906_1_0_2"/>
<dbReference type="InParanoid" id="Q60326"/>
<dbReference type="OrthoDB" id="52918at2157"/>
<dbReference type="PhylomeDB" id="Q60326"/>
<dbReference type="BRENDA" id="5.4.2.12">
    <property type="organism ID" value="3260"/>
</dbReference>
<dbReference type="UniPathway" id="UPA00109">
    <property type="reaction ID" value="UER00186"/>
</dbReference>
<dbReference type="Proteomes" id="UP000000805">
    <property type="component" value="Chromosome"/>
</dbReference>
<dbReference type="GO" id="GO:0046872">
    <property type="term" value="F:metal ion binding"/>
    <property type="evidence" value="ECO:0007669"/>
    <property type="project" value="InterPro"/>
</dbReference>
<dbReference type="GO" id="GO:0004619">
    <property type="term" value="F:phosphoglycerate mutase activity"/>
    <property type="evidence" value="ECO:0007669"/>
    <property type="project" value="UniProtKB-EC"/>
</dbReference>
<dbReference type="GO" id="GO:0006096">
    <property type="term" value="P:glycolytic process"/>
    <property type="evidence" value="ECO:0007669"/>
    <property type="project" value="UniProtKB-UniRule"/>
</dbReference>
<dbReference type="CDD" id="cd16011">
    <property type="entry name" value="iPGM_like"/>
    <property type="match status" value="1"/>
</dbReference>
<dbReference type="Gene3D" id="3.40.720.10">
    <property type="entry name" value="Alkaline Phosphatase, subunit A"/>
    <property type="match status" value="2"/>
</dbReference>
<dbReference type="Gene3D" id="3.30.70.2130">
    <property type="entry name" value="Metalloenzyme domain"/>
    <property type="match status" value="1"/>
</dbReference>
<dbReference type="HAMAP" id="MF_01402_A">
    <property type="entry name" value="ApgM_A"/>
    <property type="match status" value="1"/>
</dbReference>
<dbReference type="InterPro" id="IPR017850">
    <property type="entry name" value="Alkaline_phosphatase_core_sf"/>
</dbReference>
<dbReference type="InterPro" id="IPR023665">
    <property type="entry name" value="ApgAM_prokaryotes"/>
</dbReference>
<dbReference type="InterPro" id="IPR006124">
    <property type="entry name" value="Metalloenzyme"/>
</dbReference>
<dbReference type="InterPro" id="IPR004456">
    <property type="entry name" value="Pglycerate_mutase_ApgM"/>
</dbReference>
<dbReference type="InterPro" id="IPR042253">
    <property type="entry name" value="Pglycerate_mutase_ApgM_sf"/>
</dbReference>
<dbReference type="NCBIfam" id="TIGR00306">
    <property type="entry name" value="apgM"/>
    <property type="match status" value="1"/>
</dbReference>
<dbReference type="PANTHER" id="PTHR31209">
    <property type="entry name" value="COFACTOR-INDEPENDENT PHOSPHOGLYCERATE MUTASE"/>
    <property type="match status" value="1"/>
</dbReference>
<dbReference type="PANTHER" id="PTHR31209:SF0">
    <property type="entry name" value="METALLOENZYME DOMAIN-CONTAINING PROTEIN"/>
    <property type="match status" value="1"/>
</dbReference>
<dbReference type="Pfam" id="PF01676">
    <property type="entry name" value="Metalloenzyme"/>
    <property type="match status" value="1"/>
</dbReference>
<dbReference type="Pfam" id="PF10143">
    <property type="entry name" value="PhosphMutase"/>
    <property type="match status" value="1"/>
</dbReference>
<dbReference type="PIRSF" id="PIRSF006392">
    <property type="entry name" value="IPGAM_arch"/>
    <property type="match status" value="1"/>
</dbReference>
<dbReference type="SUPFAM" id="SSF53649">
    <property type="entry name" value="Alkaline phosphatase-like"/>
    <property type="match status" value="1"/>
</dbReference>
<name>APGM2_METJA</name>
<evidence type="ECO:0000269" key="1">
    <source>
    </source>
</evidence>
<evidence type="ECO:0000305" key="2"/>
<accession>Q60326</accession>
<sequence>MRAILILLDGLGDRASEILNNKTPLQFAKTPNLDRLAENGMCGLMTTYKEGIPLGTEVAHFLLWGYSLEEFPGRGVIEALGEDIEIEKNAIYLRASLGFVKKDEKGFLVIDRRTKDISREEIEKLVDSLPTCVDGYKFELFYSFDVHFILKIKERNGWISDKISDSDPFYKNRYVMKVKAIRELCKSEVEYSKAKDTARALNKYLLNVYKILQNHKINRKRRKLEKMPANFLLTKWASRYKRVESFKEKWGMNAVILAESSLFKGLAKFLGMDFIKIESFEEGIDLIPELDYDFIHLHTKETDEAAHTKNPLNKVKVIEKIDKLIGNLKLREDDLLIITADHSTPSVGNLIHSGESVPILFYGKNVRVDNVKEFNEISCSNGHLRIRGEELMHLILNYTDRALLYGLRSGDRLRYYIPKDDEIDLLEG</sequence>
<comment type="function">
    <text>Catalyzes the interconversion of 2-phosphoglycerate and 3-phosphoglycerate.</text>
</comment>
<comment type="catalytic activity">
    <reaction evidence="1">
        <text>(2R)-2-phosphoglycerate = (2R)-3-phosphoglycerate</text>
        <dbReference type="Rhea" id="RHEA:15901"/>
        <dbReference type="ChEBI" id="CHEBI:58272"/>
        <dbReference type="ChEBI" id="CHEBI:58289"/>
        <dbReference type="EC" id="5.4.2.12"/>
    </reaction>
</comment>
<comment type="pathway">
    <text>Carbohydrate degradation; glycolysis; pyruvate from D-glyceraldehyde 3-phosphate: step 3/5.</text>
</comment>
<comment type="similarity">
    <text evidence="2">Belongs to the BPG-independent phosphoglycerate mutase family. A-PGAM subfamily.</text>
</comment>
<protein>
    <recommendedName>
        <fullName>2,3-bisphosphoglycerate-independent phosphoglycerate mutase 2</fullName>
        <shortName>BPG-independent PGAM 2</shortName>
        <shortName>Phosphoglyceromutase 2</shortName>
        <shortName>aPGAM 2</shortName>
        <ecNumber>5.4.2.12</ecNumber>
    </recommendedName>
    <alternativeName>
        <fullName>aPGAM-Mj2</fullName>
    </alternativeName>
</protein>
<keyword id="KW-0324">Glycolysis</keyword>
<keyword id="KW-0413">Isomerase</keyword>
<keyword id="KW-1185">Reference proteome</keyword>
<reference key="1">
    <citation type="journal article" date="1996" name="Science">
        <title>Complete genome sequence of the methanogenic archaeon, Methanococcus jannaschii.</title>
        <authorList>
            <person name="Bult C.J."/>
            <person name="White O."/>
            <person name="Olsen G.J."/>
            <person name="Zhou L."/>
            <person name="Fleischmann R.D."/>
            <person name="Sutton G.G."/>
            <person name="Blake J.A."/>
            <person name="FitzGerald L.M."/>
            <person name="Clayton R.A."/>
            <person name="Gocayne J.D."/>
            <person name="Kerlavage A.R."/>
            <person name="Dougherty B.A."/>
            <person name="Tomb J.-F."/>
            <person name="Adams M.D."/>
            <person name="Reich C.I."/>
            <person name="Overbeek R."/>
            <person name="Kirkness E.F."/>
            <person name="Weinstock K.G."/>
            <person name="Merrick J.M."/>
            <person name="Glodek A."/>
            <person name="Scott J.L."/>
            <person name="Geoghagen N.S.M."/>
            <person name="Weidman J.F."/>
            <person name="Fuhrmann J.L."/>
            <person name="Nguyen D."/>
            <person name="Utterback T.R."/>
            <person name="Kelley J.M."/>
            <person name="Peterson J.D."/>
            <person name="Sadow P.W."/>
            <person name="Hanna M.C."/>
            <person name="Cotton M.D."/>
            <person name="Roberts K.M."/>
            <person name="Hurst M.A."/>
            <person name="Kaine B.P."/>
            <person name="Borodovsky M."/>
            <person name="Klenk H.-P."/>
            <person name="Fraser C.M."/>
            <person name="Smith H.O."/>
            <person name="Woese C.R."/>
            <person name="Venter J.C."/>
        </authorList>
    </citation>
    <scope>NUCLEOTIDE SEQUENCE [LARGE SCALE GENOMIC DNA]</scope>
    <source>
        <strain>ATCC 43067 / DSM 2661 / JAL-1 / JCM 10045 / NBRC 100440</strain>
    </source>
</reference>
<reference key="2">
    <citation type="journal article" date="2002" name="FEBS Lett.">
        <title>A divergent archaeal member of the alkaline phosphatase binuclear metalloenzyme superfamily has phosphoglycerate mutase activity.</title>
        <authorList>
            <person name="Graham D.E."/>
            <person name="Xu H."/>
            <person name="White R.H."/>
        </authorList>
    </citation>
    <scope>CATALYTIC ACTIVITY</scope>
    <source>
        <strain>ATCC 43067 / DSM 2661 / JAL-1 / JCM 10045 / NBRC 100440</strain>
    </source>
</reference>
<organism>
    <name type="scientific">Methanocaldococcus jannaschii (strain ATCC 43067 / DSM 2661 / JAL-1 / JCM 10045 / NBRC 100440)</name>
    <name type="common">Methanococcus jannaschii</name>
    <dbReference type="NCBI Taxonomy" id="243232"/>
    <lineage>
        <taxon>Archaea</taxon>
        <taxon>Methanobacteriati</taxon>
        <taxon>Methanobacteriota</taxon>
        <taxon>Methanomada group</taxon>
        <taxon>Methanococci</taxon>
        <taxon>Methanococcales</taxon>
        <taxon>Methanocaldococcaceae</taxon>
        <taxon>Methanocaldococcus</taxon>
    </lineage>
</organism>